<protein>
    <recommendedName>
        <fullName evidence="1">Acetyl-coenzyme A synthetase</fullName>
        <shortName evidence="1">AcCoA synthetase</shortName>
        <shortName evidence="1">Acs</shortName>
        <ecNumber evidence="1">6.2.1.1</ecNumber>
    </recommendedName>
    <alternativeName>
        <fullName evidence="1">Acetate--CoA ligase</fullName>
    </alternativeName>
    <alternativeName>
        <fullName evidence="1">Acyl-activating enzyme</fullName>
    </alternativeName>
</protein>
<keyword id="KW-0007">Acetylation</keyword>
<keyword id="KW-0067">ATP-binding</keyword>
<keyword id="KW-0436">Ligase</keyword>
<keyword id="KW-0460">Magnesium</keyword>
<keyword id="KW-0479">Metal-binding</keyword>
<keyword id="KW-0547">Nucleotide-binding</keyword>
<keyword id="KW-1185">Reference proteome</keyword>
<accession>Q2LW77</accession>
<evidence type="ECO:0000255" key="1">
    <source>
        <dbReference type="HAMAP-Rule" id="MF_01123"/>
    </source>
</evidence>
<reference key="1">
    <citation type="journal article" date="2007" name="Proc. Natl. Acad. Sci. U.S.A.">
        <title>The genome of Syntrophus aciditrophicus: life at the thermodynamic limit of microbial growth.</title>
        <authorList>
            <person name="McInerney M.J."/>
            <person name="Rohlin L."/>
            <person name="Mouttaki H."/>
            <person name="Kim U."/>
            <person name="Krupp R.S."/>
            <person name="Rios-Hernandez L."/>
            <person name="Sieber J."/>
            <person name="Struchtemeyer C.G."/>
            <person name="Bhattacharyya A."/>
            <person name="Campbell J.W."/>
            <person name="Gunsalus R.P."/>
        </authorList>
    </citation>
    <scope>NUCLEOTIDE SEQUENCE [LARGE SCALE GENOMIC DNA]</scope>
    <source>
        <strain>SB</strain>
    </source>
</reference>
<sequence>MSDLLFPVPESWAKSAWIDNDVYRRMYEQSISDPEGFWGEQAGRLDWFQPWMKVKEGSFDGDVRIRWFSGGKLNVSYNCLDRHLVGRGDQIALLWEGDDPAVSRSLTYRRLHEEVCRFANVMKSLGLRRGDRVTIYLPMIPELAVAMLACTRIGVVHSIVFAGFSPESLRERIRDCQGRVVITADEGLRGGKPLPLKENADEAVGKCPFVEKVIVVRRTGSQIPWTSGRDFDWEGLMQEASADCPPEEMDAEDPLFILYTSGSTGKPKGVLHTTGGYLLFTAMSHQHIFDYHDGDIYWCTADIGWVTGHSYTIYGPLANGATTVMFEGVPNYPDWSRFWRIVDKHGVTILYTAPTAIRALMRQGDEPVRKTFRKTLRLLGTVGEPINPEAWLWYYNVVGEKRCPIVDTWWQTETGGILITPFPGAMALKPGSAARPYFGVKPAIMDSEGRFLEGTGTGNLVITEPWPGMLRTIYGDHQRFLDTYFSTYKGVYFTGDGARRDEDGDYWITGRVDDVINVSGHRLGTAEVESALAAHSAVAEAAVVGFPHEIKGQGIYAYVTLKTDRQPSDALRKELVSWVRREIGAIAAPDFIQWAPGLPKTRSGKIMRRILRKIAADDIADLGDTTTLAEPAVVDDLLKGRLAAAWE</sequence>
<gene>
    <name evidence="1" type="primary">acsA</name>
    <name type="ordered locus">SYNAS_24560</name>
    <name type="ORF">SYN_01223</name>
</gene>
<feature type="chain" id="PRO_1000137277" description="Acetyl-coenzyme A synthetase">
    <location>
        <begin position="1"/>
        <end position="647"/>
    </location>
</feature>
<feature type="binding site" evidence="1">
    <location>
        <begin position="189"/>
        <end position="192"/>
    </location>
    <ligand>
        <name>CoA</name>
        <dbReference type="ChEBI" id="CHEBI:57287"/>
    </ligand>
</feature>
<feature type="binding site" evidence="1">
    <location>
        <position position="307"/>
    </location>
    <ligand>
        <name>CoA</name>
        <dbReference type="ChEBI" id="CHEBI:57287"/>
    </ligand>
</feature>
<feature type="binding site" evidence="1">
    <location>
        <position position="331"/>
    </location>
    <ligand>
        <name>CoA</name>
        <dbReference type="ChEBI" id="CHEBI:57287"/>
    </ligand>
</feature>
<feature type="binding site" evidence="1">
    <location>
        <begin position="383"/>
        <end position="385"/>
    </location>
    <ligand>
        <name>ATP</name>
        <dbReference type="ChEBI" id="CHEBI:30616"/>
    </ligand>
</feature>
<feature type="binding site" evidence="1">
    <location>
        <begin position="407"/>
        <end position="412"/>
    </location>
    <ligand>
        <name>ATP</name>
        <dbReference type="ChEBI" id="CHEBI:30616"/>
    </ligand>
</feature>
<feature type="binding site" evidence="1">
    <location>
        <position position="496"/>
    </location>
    <ligand>
        <name>ATP</name>
        <dbReference type="ChEBI" id="CHEBI:30616"/>
    </ligand>
</feature>
<feature type="binding site" evidence="1">
    <location>
        <position position="511"/>
    </location>
    <ligand>
        <name>ATP</name>
        <dbReference type="ChEBI" id="CHEBI:30616"/>
    </ligand>
</feature>
<feature type="binding site" evidence="1">
    <location>
        <position position="519"/>
    </location>
    <ligand>
        <name>CoA</name>
        <dbReference type="ChEBI" id="CHEBI:57287"/>
    </ligand>
</feature>
<feature type="binding site" evidence="1">
    <location>
        <position position="522"/>
    </location>
    <ligand>
        <name>ATP</name>
        <dbReference type="ChEBI" id="CHEBI:30616"/>
    </ligand>
</feature>
<feature type="binding site" evidence="1">
    <location>
        <position position="535"/>
    </location>
    <ligand>
        <name>Mg(2+)</name>
        <dbReference type="ChEBI" id="CHEBI:18420"/>
    </ligand>
</feature>
<feature type="binding site" evidence="1">
    <location>
        <position position="538"/>
    </location>
    <ligand>
        <name>Mg(2+)</name>
        <dbReference type="ChEBI" id="CHEBI:18420"/>
    </ligand>
</feature>
<feature type="binding site" evidence="1">
    <location>
        <position position="580"/>
    </location>
    <ligand>
        <name>CoA</name>
        <dbReference type="ChEBI" id="CHEBI:57287"/>
    </ligand>
</feature>
<feature type="modified residue" description="N6-acetyllysine" evidence="1">
    <location>
        <position position="605"/>
    </location>
</feature>
<organism>
    <name type="scientific">Syntrophus aciditrophicus (strain SB)</name>
    <dbReference type="NCBI Taxonomy" id="56780"/>
    <lineage>
        <taxon>Bacteria</taxon>
        <taxon>Pseudomonadati</taxon>
        <taxon>Thermodesulfobacteriota</taxon>
        <taxon>Syntrophia</taxon>
        <taxon>Syntrophales</taxon>
        <taxon>Syntrophaceae</taxon>
        <taxon>Syntrophus</taxon>
    </lineage>
</organism>
<dbReference type="EC" id="6.2.1.1" evidence="1"/>
<dbReference type="EMBL" id="CP000252">
    <property type="protein sequence ID" value="ABC78335.1"/>
    <property type="molecule type" value="Genomic_DNA"/>
</dbReference>
<dbReference type="RefSeq" id="WP_011418354.1">
    <property type="nucleotide sequence ID" value="NC_007759.1"/>
</dbReference>
<dbReference type="SMR" id="Q2LW77"/>
<dbReference type="FunCoup" id="Q2LW77">
    <property type="interactions" value="435"/>
</dbReference>
<dbReference type="STRING" id="56780.SYN_01223"/>
<dbReference type="KEGG" id="sat:SYN_01223"/>
<dbReference type="eggNOG" id="COG0365">
    <property type="taxonomic scope" value="Bacteria"/>
</dbReference>
<dbReference type="HOGENOM" id="CLU_000022_3_6_7"/>
<dbReference type="InParanoid" id="Q2LW77"/>
<dbReference type="OrthoDB" id="9801302at2"/>
<dbReference type="Proteomes" id="UP000001933">
    <property type="component" value="Chromosome"/>
</dbReference>
<dbReference type="GO" id="GO:0005829">
    <property type="term" value="C:cytosol"/>
    <property type="evidence" value="ECO:0007669"/>
    <property type="project" value="TreeGrafter"/>
</dbReference>
<dbReference type="GO" id="GO:0003987">
    <property type="term" value="F:acetate-CoA ligase activity"/>
    <property type="evidence" value="ECO:0007669"/>
    <property type="project" value="UniProtKB-UniRule"/>
</dbReference>
<dbReference type="GO" id="GO:0016208">
    <property type="term" value="F:AMP binding"/>
    <property type="evidence" value="ECO:0007669"/>
    <property type="project" value="InterPro"/>
</dbReference>
<dbReference type="GO" id="GO:0005524">
    <property type="term" value="F:ATP binding"/>
    <property type="evidence" value="ECO:0007669"/>
    <property type="project" value="UniProtKB-KW"/>
</dbReference>
<dbReference type="GO" id="GO:0046872">
    <property type="term" value="F:metal ion binding"/>
    <property type="evidence" value="ECO:0007669"/>
    <property type="project" value="UniProtKB-KW"/>
</dbReference>
<dbReference type="GO" id="GO:0019427">
    <property type="term" value="P:acetyl-CoA biosynthetic process from acetate"/>
    <property type="evidence" value="ECO:0007669"/>
    <property type="project" value="InterPro"/>
</dbReference>
<dbReference type="CDD" id="cd05966">
    <property type="entry name" value="ACS"/>
    <property type="match status" value="1"/>
</dbReference>
<dbReference type="FunFam" id="3.30.300.30:FF:000004">
    <property type="entry name" value="Acetyl-coenzyme A synthetase"/>
    <property type="match status" value="1"/>
</dbReference>
<dbReference type="FunFam" id="3.40.50.12780:FF:000001">
    <property type="entry name" value="Acetyl-coenzyme A synthetase"/>
    <property type="match status" value="1"/>
</dbReference>
<dbReference type="Gene3D" id="3.30.300.30">
    <property type="match status" value="1"/>
</dbReference>
<dbReference type="Gene3D" id="3.40.50.12780">
    <property type="entry name" value="N-terminal domain of ligase-like"/>
    <property type="match status" value="1"/>
</dbReference>
<dbReference type="HAMAP" id="MF_01123">
    <property type="entry name" value="Ac_CoA_synth"/>
    <property type="match status" value="1"/>
</dbReference>
<dbReference type="InterPro" id="IPR011904">
    <property type="entry name" value="Ac_CoA_lig"/>
</dbReference>
<dbReference type="InterPro" id="IPR032387">
    <property type="entry name" value="ACAS_N"/>
</dbReference>
<dbReference type="InterPro" id="IPR025110">
    <property type="entry name" value="AMP-bd_C"/>
</dbReference>
<dbReference type="InterPro" id="IPR045851">
    <property type="entry name" value="AMP-bd_C_sf"/>
</dbReference>
<dbReference type="InterPro" id="IPR020845">
    <property type="entry name" value="AMP-binding_CS"/>
</dbReference>
<dbReference type="InterPro" id="IPR000873">
    <property type="entry name" value="AMP-dep_synth/lig_dom"/>
</dbReference>
<dbReference type="InterPro" id="IPR042099">
    <property type="entry name" value="ANL_N_sf"/>
</dbReference>
<dbReference type="NCBIfam" id="TIGR02188">
    <property type="entry name" value="Ac_CoA_lig_AcsA"/>
    <property type="match status" value="1"/>
</dbReference>
<dbReference type="NCBIfam" id="NF001208">
    <property type="entry name" value="PRK00174.1"/>
    <property type="match status" value="1"/>
</dbReference>
<dbReference type="PANTHER" id="PTHR24095">
    <property type="entry name" value="ACETYL-COENZYME A SYNTHETASE"/>
    <property type="match status" value="1"/>
</dbReference>
<dbReference type="PANTHER" id="PTHR24095:SF14">
    <property type="entry name" value="ACETYL-COENZYME A SYNTHETASE 1"/>
    <property type="match status" value="1"/>
</dbReference>
<dbReference type="Pfam" id="PF16177">
    <property type="entry name" value="ACAS_N"/>
    <property type="match status" value="1"/>
</dbReference>
<dbReference type="Pfam" id="PF00501">
    <property type="entry name" value="AMP-binding"/>
    <property type="match status" value="1"/>
</dbReference>
<dbReference type="Pfam" id="PF13193">
    <property type="entry name" value="AMP-binding_C"/>
    <property type="match status" value="1"/>
</dbReference>
<dbReference type="SUPFAM" id="SSF56801">
    <property type="entry name" value="Acetyl-CoA synthetase-like"/>
    <property type="match status" value="1"/>
</dbReference>
<dbReference type="PROSITE" id="PS00455">
    <property type="entry name" value="AMP_BINDING"/>
    <property type="match status" value="1"/>
</dbReference>
<proteinExistence type="inferred from homology"/>
<comment type="function">
    <text evidence="1">Catalyzes the conversion of acetate into acetyl-CoA (AcCoA), an essential intermediate at the junction of anabolic and catabolic pathways. AcsA undergoes a two-step reaction. In the first half reaction, AcsA combines acetate with ATP to form acetyl-adenylate (AcAMP) intermediate. In the second half reaction, it can then transfer the acetyl group from AcAMP to the sulfhydryl group of CoA, forming the product AcCoA.</text>
</comment>
<comment type="catalytic activity">
    <reaction evidence="1">
        <text>acetate + ATP + CoA = acetyl-CoA + AMP + diphosphate</text>
        <dbReference type="Rhea" id="RHEA:23176"/>
        <dbReference type="ChEBI" id="CHEBI:30089"/>
        <dbReference type="ChEBI" id="CHEBI:30616"/>
        <dbReference type="ChEBI" id="CHEBI:33019"/>
        <dbReference type="ChEBI" id="CHEBI:57287"/>
        <dbReference type="ChEBI" id="CHEBI:57288"/>
        <dbReference type="ChEBI" id="CHEBI:456215"/>
        <dbReference type="EC" id="6.2.1.1"/>
    </reaction>
</comment>
<comment type="cofactor">
    <cofactor evidence="1">
        <name>Mg(2+)</name>
        <dbReference type="ChEBI" id="CHEBI:18420"/>
    </cofactor>
</comment>
<comment type="PTM">
    <text evidence="1">Acetylated. Deacetylation by the SIR2-homolog deacetylase activates the enzyme.</text>
</comment>
<comment type="similarity">
    <text evidence="1">Belongs to the ATP-dependent AMP-binding enzyme family.</text>
</comment>
<name>ACSA_SYNAS</name>